<evidence type="ECO:0000256" key="1">
    <source>
        <dbReference type="SAM" id="MobiDB-lite"/>
    </source>
</evidence>
<sequence>ARRRRRHASTKLKRRRRRRRHGKKSHK</sequence>
<comment type="function">
    <text>Protamines substitute for histones in the chromatin of sperm during the haploid phase of spermatogenesis. They compact sperm DNA into a highly condensed, stable and inactive complex.</text>
</comment>
<comment type="subcellular location">
    <subcellularLocation>
        <location>Nucleus</location>
    </subcellularLocation>
    <subcellularLocation>
        <location>Chromosome</location>
    </subcellularLocation>
</comment>
<comment type="tissue specificity">
    <text>Testis.</text>
</comment>
<organism>
    <name type="scientific">Acipenser stellatus</name>
    <name type="common">Sevruga</name>
    <name type="synonym">Starry sturgeon</name>
    <dbReference type="NCBI Taxonomy" id="7903"/>
    <lineage>
        <taxon>Eukaryota</taxon>
        <taxon>Metazoa</taxon>
        <taxon>Chordata</taxon>
        <taxon>Craniata</taxon>
        <taxon>Vertebrata</taxon>
        <taxon>Euteleostomi</taxon>
        <taxon>Actinopterygii</taxon>
        <taxon>Chondrostei</taxon>
        <taxon>Acipenseriformes</taxon>
        <taxon>Acipenseridae</taxon>
        <taxon>Acipenser</taxon>
    </lineage>
</organism>
<dbReference type="PIR" id="A02666">
    <property type="entry name" value="SRAPAS"/>
</dbReference>
<dbReference type="SMR" id="P02324"/>
<dbReference type="GO" id="GO:0000786">
    <property type="term" value="C:nucleosome"/>
    <property type="evidence" value="ECO:0007669"/>
    <property type="project" value="UniProtKB-KW"/>
</dbReference>
<dbReference type="GO" id="GO:0005634">
    <property type="term" value="C:nucleus"/>
    <property type="evidence" value="ECO:0007669"/>
    <property type="project" value="UniProtKB-SubCell"/>
</dbReference>
<dbReference type="GO" id="GO:0003677">
    <property type="term" value="F:DNA binding"/>
    <property type="evidence" value="ECO:0007669"/>
    <property type="project" value="UniProtKB-KW"/>
</dbReference>
<dbReference type="GO" id="GO:0030154">
    <property type="term" value="P:cell differentiation"/>
    <property type="evidence" value="ECO:0007669"/>
    <property type="project" value="UniProtKB-KW"/>
</dbReference>
<dbReference type="GO" id="GO:0030261">
    <property type="term" value="P:chromosome condensation"/>
    <property type="evidence" value="ECO:0007669"/>
    <property type="project" value="UniProtKB-KW"/>
</dbReference>
<dbReference type="GO" id="GO:0007283">
    <property type="term" value="P:spermatogenesis"/>
    <property type="evidence" value="ECO:0007669"/>
    <property type="project" value="UniProtKB-KW"/>
</dbReference>
<protein>
    <recommendedName>
        <fullName>Protamine-A</fullName>
    </recommendedName>
    <alternativeName>
        <fullName>Stellin-A</fullName>
    </alternativeName>
    <component>
        <recommendedName>
            <fullName>Protamine-C</fullName>
        </recommendedName>
        <alternativeName>
            <fullName>Stellin-C</fullName>
        </alternativeName>
    </component>
</protein>
<proteinExistence type="evidence at protein level"/>
<accession>P02324</accession>
<feature type="peptide" id="PRO_0000025821" description="Protamine-A">
    <location>
        <begin position="1"/>
        <end position="27"/>
    </location>
</feature>
<feature type="peptide" id="PRO_0000025822" description="Protamine-C">
    <location>
        <begin position="2"/>
        <end position="27"/>
    </location>
</feature>
<feature type="region of interest" description="Disordered" evidence="1">
    <location>
        <begin position="1"/>
        <end position="27"/>
    </location>
</feature>
<keyword id="KW-0158">Chromosome</keyword>
<keyword id="KW-0217">Developmental protein</keyword>
<keyword id="KW-0221">Differentiation</keyword>
<keyword id="KW-0903">Direct protein sequencing</keyword>
<keyword id="KW-0226">DNA condensation</keyword>
<keyword id="KW-0238">DNA-binding</keyword>
<keyword id="KW-0544">Nucleosome core</keyword>
<keyword id="KW-0539">Nucleus</keyword>
<keyword id="KW-0744">Spermatogenesis</keyword>
<name>PRTA_ACIST</name>
<reference key="1">
    <citation type="journal article" date="1979" name="Bioorg. Khim.">
        <title>The primary structure of stellin A.</title>
        <authorList>
            <person name="Yulikova E.P."/>
            <person name="Rybin V.K."/>
            <person name="Silaev A.B."/>
        </authorList>
    </citation>
    <scope>PROTEIN SEQUENCE</scope>
</reference>
<reference key="2">
    <citation type="journal article" date="1992" name="Mol. Biol. (Mosk.)">
        <title>Comparison of amino acid sequences of sturgeon triprotamines using protamines from Acipenser stellatus gonads as an example.</title>
        <authorList>
            <person name="Rybin V.K."/>
            <person name="Revina L.P."/>
            <person name="Baratova L.A."/>
        </authorList>
    </citation>
    <scope>PROTEIN SEQUENCE OF 2-27</scope>
</reference>